<dbReference type="EMBL" id="BA000030">
    <property type="protein sequence ID" value="BAC72656.1"/>
    <property type="molecule type" value="Genomic_DNA"/>
</dbReference>
<dbReference type="RefSeq" id="WP_005481207.1">
    <property type="nucleotide sequence ID" value="NZ_JZJK01000077.1"/>
</dbReference>
<dbReference type="SMR" id="Q82DM8"/>
<dbReference type="GeneID" id="96265044"/>
<dbReference type="KEGG" id="sma:SAVERM_4944"/>
<dbReference type="eggNOG" id="COG1841">
    <property type="taxonomic scope" value="Bacteria"/>
</dbReference>
<dbReference type="HOGENOM" id="CLU_131047_2_0_11"/>
<dbReference type="OrthoDB" id="9812790at2"/>
<dbReference type="Proteomes" id="UP000000428">
    <property type="component" value="Chromosome"/>
</dbReference>
<dbReference type="GO" id="GO:0022625">
    <property type="term" value="C:cytosolic large ribosomal subunit"/>
    <property type="evidence" value="ECO:0007669"/>
    <property type="project" value="TreeGrafter"/>
</dbReference>
<dbReference type="GO" id="GO:0003735">
    <property type="term" value="F:structural constituent of ribosome"/>
    <property type="evidence" value="ECO:0007669"/>
    <property type="project" value="InterPro"/>
</dbReference>
<dbReference type="GO" id="GO:0006412">
    <property type="term" value="P:translation"/>
    <property type="evidence" value="ECO:0007669"/>
    <property type="project" value="UniProtKB-UniRule"/>
</dbReference>
<dbReference type="CDD" id="cd01658">
    <property type="entry name" value="Ribosomal_L30"/>
    <property type="match status" value="1"/>
</dbReference>
<dbReference type="FunFam" id="3.30.1390.20:FF:000001">
    <property type="entry name" value="50S ribosomal protein L30"/>
    <property type="match status" value="1"/>
</dbReference>
<dbReference type="Gene3D" id="3.30.1390.20">
    <property type="entry name" value="Ribosomal protein L30, ferredoxin-like fold domain"/>
    <property type="match status" value="1"/>
</dbReference>
<dbReference type="HAMAP" id="MF_01371_B">
    <property type="entry name" value="Ribosomal_uL30_B"/>
    <property type="match status" value="1"/>
</dbReference>
<dbReference type="InterPro" id="IPR036919">
    <property type="entry name" value="Ribo_uL30_ferredoxin-like_sf"/>
</dbReference>
<dbReference type="InterPro" id="IPR005996">
    <property type="entry name" value="Ribosomal_uL30_bac-type"/>
</dbReference>
<dbReference type="InterPro" id="IPR018038">
    <property type="entry name" value="Ribosomal_uL30_CS"/>
</dbReference>
<dbReference type="InterPro" id="IPR016082">
    <property type="entry name" value="Ribosomal_uL30_ferredoxin-like"/>
</dbReference>
<dbReference type="NCBIfam" id="TIGR01308">
    <property type="entry name" value="rpmD_bact"/>
    <property type="match status" value="1"/>
</dbReference>
<dbReference type="PANTHER" id="PTHR15892:SF2">
    <property type="entry name" value="LARGE RIBOSOMAL SUBUNIT PROTEIN UL30M"/>
    <property type="match status" value="1"/>
</dbReference>
<dbReference type="PANTHER" id="PTHR15892">
    <property type="entry name" value="MITOCHONDRIAL RIBOSOMAL PROTEIN L30"/>
    <property type="match status" value="1"/>
</dbReference>
<dbReference type="Pfam" id="PF00327">
    <property type="entry name" value="Ribosomal_L30"/>
    <property type="match status" value="1"/>
</dbReference>
<dbReference type="PIRSF" id="PIRSF002211">
    <property type="entry name" value="Ribosomal_L30_bac-type"/>
    <property type="match status" value="1"/>
</dbReference>
<dbReference type="SUPFAM" id="SSF55129">
    <property type="entry name" value="Ribosomal protein L30p/L7e"/>
    <property type="match status" value="1"/>
</dbReference>
<dbReference type="PROSITE" id="PS00634">
    <property type="entry name" value="RIBOSOMAL_L30"/>
    <property type="match status" value="1"/>
</dbReference>
<reference key="1">
    <citation type="journal article" date="2003" name="Nat. Biotechnol.">
        <title>Complete genome sequence and comparative analysis of the industrial microorganism Streptomyces avermitilis.</title>
        <authorList>
            <person name="Ikeda H."/>
            <person name="Ishikawa J."/>
            <person name="Hanamoto A."/>
            <person name="Shinose M."/>
            <person name="Kikuchi H."/>
            <person name="Shiba T."/>
            <person name="Sakaki Y."/>
            <person name="Hattori M."/>
            <person name="Omura S."/>
        </authorList>
    </citation>
    <scope>NUCLEOTIDE SEQUENCE [LARGE SCALE GENOMIC DNA]</scope>
    <source>
        <strain>ATCC 31267 / DSM 46492 / JCM 5070 / NBRC 14893 / NCIMB 12804 / NRRL 8165 / MA-4680</strain>
    </source>
</reference>
<reference key="2">
    <citation type="journal article" date="2001" name="Proc. Natl. Acad. Sci. U.S.A.">
        <title>Genome sequence of an industrial microorganism Streptomyces avermitilis: deducing the ability of producing secondary metabolites.</title>
        <authorList>
            <person name="Omura S."/>
            <person name="Ikeda H."/>
            <person name="Ishikawa J."/>
            <person name="Hanamoto A."/>
            <person name="Takahashi C."/>
            <person name="Shinose M."/>
            <person name="Takahashi Y."/>
            <person name="Horikawa H."/>
            <person name="Nakazawa H."/>
            <person name="Osonoe T."/>
            <person name="Kikuchi H."/>
            <person name="Shiba T."/>
            <person name="Sakaki Y."/>
            <person name="Hattori M."/>
        </authorList>
    </citation>
    <scope>NUCLEOTIDE SEQUENCE [LARGE SCALE GENOMIC DNA]</scope>
    <source>
        <strain>ATCC 31267 / DSM 46492 / JCM 5070 / NBRC 14893 / NCIMB 12804 / NRRL 8165 / MA-4680</strain>
    </source>
</reference>
<protein>
    <recommendedName>
        <fullName evidence="1">Large ribosomal subunit protein uL30</fullName>
    </recommendedName>
    <alternativeName>
        <fullName evidence="2">50S ribosomal protein L30</fullName>
    </alternativeName>
</protein>
<name>RL30_STRAW</name>
<proteinExistence type="inferred from homology"/>
<organism>
    <name type="scientific">Streptomyces avermitilis (strain ATCC 31267 / DSM 46492 / JCM 5070 / NBRC 14893 / NCIMB 12804 / NRRL 8165 / MA-4680)</name>
    <dbReference type="NCBI Taxonomy" id="227882"/>
    <lineage>
        <taxon>Bacteria</taxon>
        <taxon>Bacillati</taxon>
        <taxon>Actinomycetota</taxon>
        <taxon>Actinomycetes</taxon>
        <taxon>Kitasatosporales</taxon>
        <taxon>Streptomycetaceae</taxon>
        <taxon>Streptomyces</taxon>
    </lineage>
</organism>
<evidence type="ECO:0000255" key="1">
    <source>
        <dbReference type="HAMAP-Rule" id="MF_01371"/>
    </source>
</evidence>
<evidence type="ECO:0000305" key="2"/>
<comment type="subunit">
    <text evidence="1">Part of the 50S ribosomal subunit.</text>
</comment>
<comment type="similarity">
    <text evidence="1">Belongs to the universal ribosomal protein uL30 family.</text>
</comment>
<sequence length="60" mass="6890">MAQLKITQTKSYIGSKQNHRDTLRSLGLKGINTQVVKEDRPEFRGMVHTVRHLVTVEEVD</sequence>
<keyword id="KW-1185">Reference proteome</keyword>
<keyword id="KW-0687">Ribonucleoprotein</keyword>
<keyword id="KW-0689">Ribosomal protein</keyword>
<accession>Q82DM8</accession>
<feature type="chain" id="PRO_1000056115" description="Large ribosomal subunit protein uL30">
    <location>
        <begin position="1"/>
        <end position="60"/>
    </location>
</feature>
<gene>
    <name evidence="1" type="primary">rpmD</name>
    <name type="ordered locus">SAV_4944</name>
</gene>